<accession>Q3V1N1</accession>
<accession>Q3TAN2</accession>
<accession>Q8C4N5</accession>
<keyword id="KW-0007">Acetylation</keyword>
<keyword id="KW-0963">Cytoplasm</keyword>
<keyword id="KW-0342">GTP-binding</keyword>
<keyword id="KW-0391">Immunity</keyword>
<keyword id="KW-0395">Inflammatory response</keyword>
<keyword id="KW-0399">Innate immunity</keyword>
<keyword id="KW-0433">Leucine-rich repeat</keyword>
<keyword id="KW-0547">Nucleotide-binding</keyword>
<keyword id="KW-1185">Reference proteome</keyword>
<keyword id="KW-0677">Repeat</keyword>
<keyword id="KW-0734">Signal transduction inhibitor</keyword>
<keyword id="KW-0832">Ubl conjugation</keyword>
<feature type="initiator methionine" description="Removed" evidence="1">
    <location>
        <position position="1"/>
    </location>
</feature>
<feature type="chain" id="PRO_0000308610" description="Malignant fibrous histiocytoma-amplified sequence 1 homolog">
    <location>
        <begin position="2"/>
        <end position="1048"/>
    </location>
</feature>
<feature type="repeat" description="LRR 1">
    <location>
        <begin position="60"/>
        <end position="81"/>
    </location>
</feature>
<feature type="repeat" description="LRR 2">
    <location>
        <begin position="84"/>
        <end position="105"/>
    </location>
</feature>
<feature type="repeat" description="LRR 3">
    <location>
        <begin position="108"/>
        <end position="129"/>
    </location>
</feature>
<feature type="repeat" description="LRR 4">
    <location>
        <begin position="132"/>
        <end position="153"/>
    </location>
</feature>
<feature type="repeat" description="LRR 5">
    <location>
        <begin position="155"/>
        <end position="176"/>
    </location>
</feature>
<feature type="repeat" description="LRR 6">
    <location>
        <begin position="178"/>
        <end position="199"/>
    </location>
</feature>
<feature type="repeat" description="LRR 7">
    <location>
        <begin position="201"/>
        <end position="222"/>
    </location>
</feature>
<feature type="repeat" description="LRR 8">
    <location>
        <begin position="224"/>
        <end position="246"/>
    </location>
</feature>
<feature type="repeat" description="LRR 9">
    <location>
        <begin position="247"/>
        <end position="268"/>
    </location>
</feature>
<feature type="repeat" description="LRR 10">
    <location>
        <begin position="270"/>
        <end position="292"/>
    </location>
</feature>
<feature type="repeat" description="LRR 11">
    <location>
        <begin position="293"/>
        <end position="314"/>
    </location>
</feature>
<feature type="repeat" description="LRR 12">
    <location>
        <begin position="316"/>
        <end position="337"/>
    </location>
</feature>
<feature type="repeat" description="LRR 13">
    <location>
        <begin position="339"/>
        <end position="360"/>
    </location>
</feature>
<feature type="domain" description="Roc" evidence="2">
    <location>
        <begin position="399"/>
        <end position="645"/>
    </location>
</feature>
<feature type="region of interest" description="Required for interaction with PPP2R2A" evidence="1">
    <location>
        <begin position="60"/>
        <end position="645"/>
    </location>
</feature>
<feature type="region of interest" description="Required for interaction with PJA2" evidence="1">
    <location>
        <begin position="60"/>
        <end position="360"/>
    </location>
</feature>
<feature type="modified residue" description="N-acetylalanine" evidence="1">
    <location>
        <position position="2"/>
    </location>
</feature>
<feature type="modified residue" description="N6-acetyllysine" evidence="1">
    <location>
        <position position="597"/>
    </location>
</feature>
<feature type="sequence conflict" description="In Ref. 2; BAE42636." evidence="6" ref="2">
    <original>L</original>
    <variation>M</variation>
    <location>
        <position position="133"/>
    </location>
</feature>
<feature type="sequence conflict" description="In Ref. 2; BAE42636." evidence="6" ref="2">
    <original>R</original>
    <variation>P</variation>
    <location>
        <position position="362"/>
    </location>
</feature>
<feature type="sequence conflict" description="In Ref. 2; BAE42636." evidence="6" ref="2">
    <original>R</original>
    <variation>Q</variation>
    <location>
        <position position="635"/>
    </location>
</feature>
<sequence>MAGQDSGNLKTVRLWRDAALRARKLRSNLRQLTLSCPGAGGDPLESPDAPQLVLPANIGDIEVLNLGNNGLEDVPEGLGSALGSLRVLVLRRNRFARLPPAVAELGHHLTELDVSHNRLTILGAEVVSALRELRKLNLSHNQLPALPAQLGALAHLEELDVSFNRLAHLPDSFSCLNHLRTLDVDHNQLTAFPQQLLQLAALEELDVSSNRLRGLPEDISALRALKILWLSGAELGTLPRGFCELASLESLMLDNNGLQALPDEFSRLQRLKMLNLSSNLFEEFPAALLPLAGLEELYLSRNQLTSVPSLIAGLGRLLTLWLDNNRIRYLPDSIVELTGLEELVLQGNQIAVLPDNFGQLSRVGLWKIKDNPLIQPPYEVCMKGIPYIAAYQKELAHSQPAVQPRLKLLLMGHKAAGKTLLRHCLTEDKVEGGQGGGDKEKSYLPFPPLGSKGIEVTSWTADASRGLRFIVYDLAGDESYEVIQPFFLSPGALYVLVVNLATYEPRCFPTTVGSFLHRVGARVPHAVVCIVGTHADLCGERELEEKCLDIHRQIALQEKNDAEGLSHLAKVVDEALARDFELRSASPHAAYYGVSDKNLRRRKAHFQYLLNHRLQILSPVLPVSCRDPLQLQRLRDKLLSVAEHREIFPNLHRVLPRSWQVLEELHFQPPQAQRLWLSWWDSARLGLQAGLTEDRLQSALSYLHESGKLLYFEDSPALKEHVFHNLTRLIDILNVFFQRDASLLLHKLLLGTNGEGEGEGESFPTIAVPSPGQDPLRATQLHHYVEGFLLHGLLPAHIIRLLLKPHVQAQQDLQLLLELLEKMGLCYCLNKPKGKPLNGSAAWYKFPCYVQNEVPHAEAWINGTNLAGQSFVAEQLQIEYSFPFTFPPGLFARYSVQINSHVVHRSDGKFQIFAYRGKVPVVVSYRPAKGVLQPDTLSIASHASLPNIWTAWQAITPLVEELNVLLQEWPGLHYTVHILCSKCLKRGSPNPHAFPGELLSQPRPEGVAEIICPKNGSERVNVALVYPPTPTVISPCSKKNVGEKHRNQ</sequence>
<name>MFHA1_MOUSE</name>
<reference key="1">
    <citation type="journal article" date="2009" name="PLoS Biol.">
        <title>Lineage-specific biology revealed by a finished genome assembly of the mouse.</title>
        <authorList>
            <person name="Church D.M."/>
            <person name="Goodstadt L."/>
            <person name="Hillier L.W."/>
            <person name="Zody M.C."/>
            <person name="Goldstein S."/>
            <person name="She X."/>
            <person name="Bult C.J."/>
            <person name="Agarwala R."/>
            <person name="Cherry J.L."/>
            <person name="DiCuccio M."/>
            <person name="Hlavina W."/>
            <person name="Kapustin Y."/>
            <person name="Meric P."/>
            <person name="Maglott D."/>
            <person name="Birtle Z."/>
            <person name="Marques A.C."/>
            <person name="Graves T."/>
            <person name="Zhou S."/>
            <person name="Teague B."/>
            <person name="Potamousis K."/>
            <person name="Churas C."/>
            <person name="Place M."/>
            <person name="Herschleb J."/>
            <person name="Runnheim R."/>
            <person name="Forrest D."/>
            <person name="Amos-Landgraf J."/>
            <person name="Schwartz D.C."/>
            <person name="Cheng Z."/>
            <person name="Lindblad-Toh K."/>
            <person name="Eichler E.E."/>
            <person name="Ponting C.P."/>
        </authorList>
    </citation>
    <scope>NUCLEOTIDE SEQUENCE [LARGE SCALE GENOMIC DNA]</scope>
    <source>
        <strain>C57BL/6J</strain>
    </source>
</reference>
<reference key="2">
    <citation type="journal article" date="2005" name="Science">
        <title>The transcriptional landscape of the mammalian genome.</title>
        <authorList>
            <person name="Carninci P."/>
            <person name="Kasukawa T."/>
            <person name="Katayama S."/>
            <person name="Gough J."/>
            <person name="Frith M.C."/>
            <person name="Maeda N."/>
            <person name="Oyama R."/>
            <person name="Ravasi T."/>
            <person name="Lenhard B."/>
            <person name="Wells C."/>
            <person name="Kodzius R."/>
            <person name="Shimokawa K."/>
            <person name="Bajic V.B."/>
            <person name="Brenner S.E."/>
            <person name="Batalov S."/>
            <person name="Forrest A.R."/>
            <person name="Zavolan M."/>
            <person name="Davis M.J."/>
            <person name="Wilming L.G."/>
            <person name="Aidinis V."/>
            <person name="Allen J.E."/>
            <person name="Ambesi-Impiombato A."/>
            <person name="Apweiler R."/>
            <person name="Aturaliya R.N."/>
            <person name="Bailey T.L."/>
            <person name="Bansal M."/>
            <person name="Baxter L."/>
            <person name="Beisel K.W."/>
            <person name="Bersano T."/>
            <person name="Bono H."/>
            <person name="Chalk A.M."/>
            <person name="Chiu K.P."/>
            <person name="Choudhary V."/>
            <person name="Christoffels A."/>
            <person name="Clutterbuck D.R."/>
            <person name="Crowe M.L."/>
            <person name="Dalla E."/>
            <person name="Dalrymple B.P."/>
            <person name="de Bono B."/>
            <person name="Della Gatta G."/>
            <person name="di Bernardo D."/>
            <person name="Down T."/>
            <person name="Engstrom P."/>
            <person name="Fagiolini M."/>
            <person name="Faulkner G."/>
            <person name="Fletcher C.F."/>
            <person name="Fukushima T."/>
            <person name="Furuno M."/>
            <person name="Futaki S."/>
            <person name="Gariboldi M."/>
            <person name="Georgii-Hemming P."/>
            <person name="Gingeras T.R."/>
            <person name="Gojobori T."/>
            <person name="Green R.E."/>
            <person name="Gustincich S."/>
            <person name="Harbers M."/>
            <person name="Hayashi Y."/>
            <person name="Hensch T.K."/>
            <person name="Hirokawa N."/>
            <person name="Hill D."/>
            <person name="Huminiecki L."/>
            <person name="Iacono M."/>
            <person name="Ikeo K."/>
            <person name="Iwama A."/>
            <person name="Ishikawa T."/>
            <person name="Jakt M."/>
            <person name="Kanapin A."/>
            <person name="Katoh M."/>
            <person name="Kawasawa Y."/>
            <person name="Kelso J."/>
            <person name="Kitamura H."/>
            <person name="Kitano H."/>
            <person name="Kollias G."/>
            <person name="Krishnan S.P."/>
            <person name="Kruger A."/>
            <person name="Kummerfeld S.K."/>
            <person name="Kurochkin I.V."/>
            <person name="Lareau L.F."/>
            <person name="Lazarevic D."/>
            <person name="Lipovich L."/>
            <person name="Liu J."/>
            <person name="Liuni S."/>
            <person name="McWilliam S."/>
            <person name="Madan Babu M."/>
            <person name="Madera M."/>
            <person name="Marchionni L."/>
            <person name="Matsuda H."/>
            <person name="Matsuzawa S."/>
            <person name="Miki H."/>
            <person name="Mignone F."/>
            <person name="Miyake S."/>
            <person name="Morris K."/>
            <person name="Mottagui-Tabar S."/>
            <person name="Mulder N."/>
            <person name="Nakano N."/>
            <person name="Nakauchi H."/>
            <person name="Ng P."/>
            <person name="Nilsson R."/>
            <person name="Nishiguchi S."/>
            <person name="Nishikawa S."/>
            <person name="Nori F."/>
            <person name="Ohara O."/>
            <person name="Okazaki Y."/>
            <person name="Orlando V."/>
            <person name="Pang K.C."/>
            <person name="Pavan W.J."/>
            <person name="Pavesi G."/>
            <person name="Pesole G."/>
            <person name="Petrovsky N."/>
            <person name="Piazza S."/>
            <person name="Reed J."/>
            <person name="Reid J.F."/>
            <person name="Ring B.Z."/>
            <person name="Ringwald M."/>
            <person name="Rost B."/>
            <person name="Ruan Y."/>
            <person name="Salzberg S.L."/>
            <person name="Sandelin A."/>
            <person name="Schneider C."/>
            <person name="Schoenbach C."/>
            <person name="Sekiguchi K."/>
            <person name="Semple C.A."/>
            <person name="Seno S."/>
            <person name="Sessa L."/>
            <person name="Sheng Y."/>
            <person name="Shibata Y."/>
            <person name="Shimada H."/>
            <person name="Shimada K."/>
            <person name="Silva D."/>
            <person name="Sinclair B."/>
            <person name="Sperling S."/>
            <person name="Stupka E."/>
            <person name="Sugiura K."/>
            <person name="Sultana R."/>
            <person name="Takenaka Y."/>
            <person name="Taki K."/>
            <person name="Tammoja K."/>
            <person name="Tan S.L."/>
            <person name="Tang S."/>
            <person name="Taylor M.S."/>
            <person name="Tegner J."/>
            <person name="Teichmann S.A."/>
            <person name="Ueda H.R."/>
            <person name="van Nimwegen E."/>
            <person name="Verardo R."/>
            <person name="Wei C.L."/>
            <person name="Yagi K."/>
            <person name="Yamanishi H."/>
            <person name="Zabarovsky E."/>
            <person name="Zhu S."/>
            <person name="Zimmer A."/>
            <person name="Hide W."/>
            <person name="Bult C."/>
            <person name="Grimmond S.M."/>
            <person name="Teasdale R.D."/>
            <person name="Liu E.T."/>
            <person name="Brusic V."/>
            <person name="Quackenbush J."/>
            <person name="Wahlestedt C."/>
            <person name="Mattick J.S."/>
            <person name="Hume D.A."/>
            <person name="Kai C."/>
            <person name="Sasaki D."/>
            <person name="Tomaru Y."/>
            <person name="Fukuda S."/>
            <person name="Kanamori-Katayama M."/>
            <person name="Suzuki M."/>
            <person name="Aoki J."/>
            <person name="Arakawa T."/>
            <person name="Iida J."/>
            <person name="Imamura K."/>
            <person name="Itoh M."/>
            <person name="Kato T."/>
            <person name="Kawaji H."/>
            <person name="Kawagashira N."/>
            <person name="Kawashima T."/>
            <person name="Kojima M."/>
            <person name="Kondo S."/>
            <person name="Konno H."/>
            <person name="Nakano K."/>
            <person name="Ninomiya N."/>
            <person name="Nishio T."/>
            <person name="Okada M."/>
            <person name="Plessy C."/>
            <person name="Shibata K."/>
            <person name="Shiraki T."/>
            <person name="Suzuki S."/>
            <person name="Tagami M."/>
            <person name="Waki K."/>
            <person name="Watahiki A."/>
            <person name="Okamura-Oho Y."/>
            <person name="Suzuki H."/>
            <person name="Kawai J."/>
            <person name="Hayashizaki Y."/>
        </authorList>
    </citation>
    <scope>NUCLEOTIDE SEQUENCE [LARGE SCALE MRNA] OF 73-1048</scope>
    <source>
        <strain>C57BL/6J</strain>
        <strain>NOD</strain>
        <tissue>Head</tissue>
        <tissue>Spleen</tissue>
    </source>
</reference>
<reference key="3">
    <citation type="journal article" date="2011" name="Proc. Natl. Acad. Sci. U.S.A.">
        <title>Human leucine-rich repeat proteins: a genome-wide bioinformatic categorization and functional analysis in innate immunity.</title>
        <authorList>
            <person name="Ng A.C."/>
            <person name="Eisenberg J.M."/>
            <person name="Heath R.J."/>
            <person name="Huett A."/>
            <person name="Robinson C.M."/>
            <person name="Nau G.J."/>
            <person name="Xavier R.J."/>
        </authorList>
    </citation>
    <scope>FUNCTION</scope>
</reference>
<reference key="4">
    <citation type="journal article" date="2015" name="PLoS ONE">
        <title>MFHAS1 is associated with sepsis and stimulates TLR2/NF-kappaB signaling pathway following negative regulation.</title>
        <authorList>
            <person name="Zhong J."/>
            <person name="Shi Q.Q."/>
            <person name="Zhu M.M."/>
            <person name="Shen J."/>
            <person name="Wang H.H."/>
            <person name="Ma D."/>
            <person name="Miao C.H."/>
        </authorList>
    </citation>
    <scope>FUNCTION</scope>
</reference>
<reference key="5">
    <citation type="journal article" date="2017" name="Mol. Immunol.">
        <title>MFHAS1 suppresses TLR4 signaling pathway via induction of PP2A C subunit cytoplasm translocation and inhibition of c-Jun dephosphorylation at Thr239.</title>
        <authorList>
            <person name="Shi Q."/>
            <person name="Xiong B."/>
            <person name="Zhong J."/>
            <person name="Wang H."/>
            <person name="Ma D."/>
            <person name="Miao C."/>
        </authorList>
    </citation>
    <scope>INDUCTION</scope>
</reference>
<organism>
    <name type="scientific">Mus musculus</name>
    <name type="common">Mouse</name>
    <dbReference type="NCBI Taxonomy" id="10090"/>
    <lineage>
        <taxon>Eukaryota</taxon>
        <taxon>Metazoa</taxon>
        <taxon>Chordata</taxon>
        <taxon>Craniata</taxon>
        <taxon>Vertebrata</taxon>
        <taxon>Euteleostomi</taxon>
        <taxon>Mammalia</taxon>
        <taxon>Eutheria</taxon>
        <taxon>Euarchontoglires</taxon>
        <taxon>Glires</taxon>
        <taxon>Rodentia</taxon>
        <taxon>Myomorpha</taxon>
        <taxon>Muroidea</taxon>
        <taxon>Muridae</taxon>
        <taxon>Murinae</taxon>
        <taxon>Mus</taxon>
        <taxon>Mus</taxon>
    </lineage>
</organism>
<proteinExistence type="evidence at protein level"/>
<evidence type="ECO:0000250" key="1">
    <source>
        <dbReference type="UniProtKB" id="Q9Y4C4"/>
    </source>
</evidence>
<evidence type="ECO:0000255" key="2">
    <source>
        <dbReference type="PROSITE-ProRule" id="PRU00758"/>
    </source>
</evidence>
<evidence type="ECO:0000269" key="3">
    <source>
    </source>
</evidence>
<evidence type="ECO:0000269" key="4">
    <source>
    </source>
</evidence>
<evidence type="ECO:0000269" key="5">
    <source>
    </source>
</evidence>
<evidence type="ECO:0000305" key="6"/>
<evidence type="ECO:0000312" key="7">
    <source>
        <dbReference type="MGI" id="MGI:1098644"/>
    </source>
</evidence>
<gene>
    <name evidence="7" type="primary">Mfhas1</name>
</gene>
<comment type="function">
    <text evidence="1 3 4">Probable GTP-binding protein (By similarity). Functions in innate immunity and more specifically the inflammatory response as a regulator of the Toll-like receptor TLR2 and TLR4 signaling pathways (PubMed:20616063, PubMed:26599367). Negatively regulates the part of the TLR4 signaling pathway that leads to the activation of the transcription factor AP-1. By retaining the phosphatase complex PP2A into the cytoplasm, prevents the dephosphorylation of the AP-1 subunit JUN which is required for proper activation of the transcription factor (By similarity). Both inhibits and activates the TLR2-dependent signaling pathway (PubMed:26599367). Positively regulates the TLR2 signaling pathway to activate specifically the downstream p38 and JNK MAP kinases and promote the polarization of macrophages toward the pro-inflammatory M1 phenotype. It may also play a role in the regulation of inflammation induced by high glucose through the PKB/AKT signaling pathway. Also involved in erythrocyte differentiation through activation of the ERK1/ERK2 signaling pathway (By similarity).</text>
</comment>
<comment type="subunit">
    <text evidence="1">Interacts with RAF1. Interacts with HSPD1. Interacts with PPP2CA; retains PPP2CA into the cytoplasm and excludes it from the nucleus. Interacts with PPP2R2A; the interaction is direct. Interacts with PJA2.</text>
</comment>
<comment type="subcellular location">
    <subcellularLocation>
        <location evidence="1">Cytoplasm</location>
    </subcellularLocation>
</comment>
<comment type="induction">
    <text evidence="5">Up-regulated by lipopolysaccharides (LPS) (at protein level).</text>
</comment>
<comment type="PTM">
    <text evidence="1">Ubiquitinated. Ubiquitination by PJA2 does not lead MFHAS1 to proteasomal degradation but positively regulates its function in polarization of macrophages.</text>
</comment>
<protein>
    <recommendedName>
        <fullName evidence="6">Malignant fibrous histiocytoma-amplified sequence 1 homolog</fullName>
    </recommendedName>
</protein>
<dbReference type="EMBL" id="AC129082">
    <property type="status" value="NOT_ANNOTATED_CDS"/>
    <property type="molecule type" value="Genomic_DNA"/>
</dbReference>
<dbReference type="EMBL" id="AC129211">
    <property type="status" value="NOT_ANNOTATED_CDS"/>
    <property type="molecule type" value="Genomic_DNA"/>
</dbReference>
<dbReference type="EMBL" id="AK081646">
    <property type="protein sequence ID" value="BAC38281.1"/>
    <property type="molecule type" value="mRNA"/>
</dbReference>
<dbReference type="EMBL" id="AK132349">
    <property type="protein sequence ID" value="BAE21119.1"/>
    <property type="molecule type" value="mRNA"/>
</dbReference>
<dbReference type="EMBL" id="AK171731">
    <property type="protein sequence ID" value="BAE42636.1"/>
    <property type="molecule type" value="mRNA"/>
</dbReference>
<dbReference type="CCDS" id="CCDS40319.1"/>
<dbReference type="RefSeq" id="NP_001074748.1">
    <property type="nucleotide sequence ID" value="NM_001081279.2"/>
</dbReference>
<dbReference type="SMR" id="Q3V1N1"/>
<dbReference type="BioGRID" id="206359">
    <property type="interactions" value="2"/>
</dbReference>
<dbReference type="FunCoup" id="Q3V1N1">
    <property type="interactions" value="1002"/>
</dbReference>
<dbReference type="STRING" id="10090.ENSMUSP00000044135"/>
<dbReference type="GlyGen" id="Q3V1N1">
    <property type="glycosylation" value="1 site"/>
</dbReference>
<dbReference type="iPTMnet" id="Q3V1N1"/>
<dbReference type="PhosphoSitePlus" id="Q3V1N1"/>
<dbReference type="PaxDb" id="10090-ENSMUSP00000044135"/>
<dbReference type="ProteomicsDB" id="252549"/>
<dbReference type="Pumba" id="Q3V1N1"/>
<dbReference type="Antibodypedia" id="65867">
    <property type="antibodies" value="13 antibodies from 8 providers"/>
</dbReference>
<dbReference type="Ensembl" id="ENSMUST00000037666.6">
    <property type="protein sequence ID" value="ENSMUSP00000044135.6"/>
    <property type="gene ID" value="ENSMUSG00000070056.7"/>
</dbReference>
<dbReference type="GeneID" id="52065"/>
<dbReference type="KEGG" id="mmu:52065"/>
<dbReference type="UCSC" id="uc009lla.1">
    <property type="organism name" value="mouse"/>
</dbReference>
<dbReference type="AGR" id="MGI:1098644"/>
<dbReference type="CTD" id="9258"/>
<dbReference type="MGI" id="MGI:1098644">
    <property type="gene designation" value="Mfhas1"/>
</dbReference>
<dbReference type="VEuPathDB" id="HostDB:ENSMUSG00000070056"/>
<dbReference type="eggNOG" id="KOG0619">
    <property type="taxonomic scope" value="Eukaryota"/>
</dbReference>
<dbReference type="GeneTree" id="ENSGT00940000158928"/>
<dbReference type="HOGENOM" id="CLU_320767_0_0_1"/>
<dbReference type="InParanoid" id="Q3V1N1"/>
<dbReference type="OMA" id="IVCPKNG"/>
<dbReference type="OrthoDB" id="676979at2759"/>
<dbReference type="PhylomeDB" id="Q3V1N1"/>
<dbReference type="TreeFam" id="TF351429"/>
<dbReference type="BioGRID-ORCS" id="52065">
    <property type="hits" value="2 hits in 76 CRISPR screens"/>
</dbReference>
<dbReference type="ChiTaRS" id="Mfhas1">
    <property type="organism name" value="mouse"/>
</dbReference>
<dbReference type="PRO" id="PR:Q3V1N1"/>
<dbReference type="Proteomes" id="UP000000589">
    <property type="component" value="Chromosome 8"/>
</dbReference>
<dbReference type="RNAct" id="Q3V1N1">
    <property type="molecule type" value="protein"/>
</dbReference>
<dbReference type="Bgee" id="ENSMUSG00000070056">
    <property type="expression patterns" value="Expressed in metanephric cortical collecting duct and 252 other cell types or tissues"/>
</dbReference>
<dbReference type="ExpressionAtlas" id="Q3V1N1">
    <property type="expression patterns" value="baseline and differential"/>
</dbReference>
<dbReference type="GO" id="GO:0005737">
    <property type="term" value="C:cytoplasm"/>
    <property type="evidence" value="ECO:0000250"/>
    <property type="project" value="UniProtKB"/>
</dbReference>
<dbReference type="GO" id="GO:0005525">
    <property type="term" value="F:GTP binding"/>
    <property type="evidence" value="ECO:0007669"/>
    <property type="project" value="UniProtKB-KW"/>
</dbReference>
<dbReference type="GO" id="GO:0051721">
    <property type="term" value="F:protein phosphatase 2A binding"/>
    <property type="evidence" value="ECO:0000250"/>
    <property type="project" value="UniProtKB"/>
</dbReference>
<dbReference type="GO" id="GO:0031625">
    <property type="term" value="F:ubiquitin protein ligase binding"/>
    <property type="evidence" value="ECO:0007669"/>
    <property type="project" value="Ensembl"/>
</dbReference>
<dbReference type="GO" id="GO:0006952">
    <property type="term" value="P:defense response"/>
    <property type="evidence" value="ECO:0000315"/>
    <property type="project" value="UniProtKB"/>
</dbReference>
<dbReference type="GO" id="GO:0030218">
    <property type="term" value="P:erythrocyte differentiation"/>
    <property type="evidence" value="ECO:0000250"/>
    <property type="project" value="UniProtKB"/>
</dbReference>
<dbReference type="GO" id="GO:0006954">
    <property type="term" value="P:inflammatory response"/>
    <property type="evidence" value="ECO:0000315"/>
    <property type="project" value="UniProtKB"/>
</dbReference>
<dbReference type="GO" id="GO:0045087">
    <property type="term" value="P:innate immune response"/>
    <property type="evidence" value="ECO:0000315"/>
    <property type="project" value="UniProtKB"/>
</dbReference>
<dbReference type="GO" id="GO:0035556">
    <property type="term" value="P:intracellular signal transduction"/>
    <property type="evidence" value="ECO:0000250"/>
    <property type="project" value="UniProtKB"/>
</dbReference>
<dbReference type="GO" id="GO:0050728">
    <property type="term" value="P:negative regulation of inflammatory response"/>
    <property type="evidence" value="ECO:0000250"/>
    <property type="project" value="UniProtKB"/>
</dbReference>
<dbReference type="GO" id="GO:1900181">
    <property type="term" value="P:negative regulation of protein localization to nucleus"/>
    <property type="evidence" value="ECO:0000250"/>
    <property type="project" value="UniProtKB"/>
</dbReference>
<dbReference type="GO" id="GO:0034136">
    <property type="term" value="P:negative regulation of toll-like receptor 2 signaling pathway"/>
    <property type="evidence" value="ECO:0000315"/>
    <property type="project" value="UniProtKB"/>
</dbReference>
<dbReference type="GO" id="GO:0034144">
    <property type="term" value="P:negative regulation of toll-like receptor 4 signaling pathway"/>
    <property type="evidence" value="ECO:0000250"/>
    <property type="project" value="UniProtKB"/>
</dbReference>
<dbReference type="GO" id="GO:0070374">
    <property type="term" value="P:positive regulation of ERK1 and ERK2 cascade"/>
    <property type="evidence" value="ECO:0000250"/>
    <property type="project" value="UniProtKB"/>
</dbReference>
<dbReference type="GO" id="GO:0046330">
    <property type="term" value="P:positive regulation of JNK cascade"/>
    <property type="evidence" value="ECO:0000250"/>
    <property type="project" value="UniProtKB"/>
</dbReference>
<dbReference type="GO" id="GO:1900745">
    <property type="term" value="P:positive regulation of p38MAPK cascade"/>
    <property type="evidence" value="ECO:0000250"/>
    <property type="project" value="UniProtKB"/>
</dbReference>
<dbReference type="GO" id="GO:0051897">
    <property type="term" value="P:positive regulation of phosphatidylinositol 3-kinase/protein kinase B signal transduction"/>
    <property type="evidence" value="ECO:0000250"/>
    <property type="project" value="UniProtKB"/>
</dbReference>
<dbReference type="GO" id="GO:0034137">
    <property type="term" value="P:positive regulation of toll-like receptor 2 signaling pathway"/>
    <property type="evidence" value="ECO:0000315"/>
    <property type="project" value="UniProtKB"/>
</dbReference>
<dbReference type="GO" id="GO:0043030">
    <property type="term" value="P:regulation of macrophage activation"/>
    <property type="evidence" value="ECO:0000250"/>
    <property type="project" value="UniProtKB"/>
</dbReference>
<dbReference type="GO" id="GO:0034121">
    <property type="term" value="P:regulation of toll-like receptor signaling pathway"/>
    <property type="evidence" value="ECO:0000315"/>
    <property type="project" value="UniProtKB"/>
</dbReference>
<dbReference type="FunFam" id="3.80.10.10:FF:001164">
    <property type="entry name" value="GH01279p"/>
    <property type="match status" value="2"/>
</dbReference>
<dbReference type="FunFam" id="3.40.50.300:FF:000850">
    <property type="entry name" value="Malignant fibrous histiocytoma-amplified sequence 1 homolog"/>
    <property type="match status" value="1"/>
</dbReference>
<dbReference type="Gene3D" id="3.40.50.300">
    <property type="entry name" value="P-loop containing nucleotide triphosphate hydrolases"/>
    <property type="match status" value="1"/>
</dbReference>
<dbReference type="Gene3D" id="3.80.10.10">
    <property type="entry name" value="Ribonuclease Inhibitor"/>
    <property type="match status" value="3"/>
</dbReference>
<dbReference type="Gene3D" id="3.30.70.1390">
    <property type="entry name" value="ROC domain from the Parkinson's disease-associated leucine-rich repeat kinase 2"/>
    <property type="match status" value="1"/>
</dbReference>
<dbReference type="InterPro" id="IPR001611">
    <property type="entry name" value="Leu-rich_rpt"/>
</dbReference>
<dbReference type="InterPro" id="IPR003591">
    <property type="entry name" value="Leu-rich_rpt_typical-subtyp"/>
</dbReference>
<dbReference type="InterPro" id="IPR032675">
    <property type="entry name" value="LRR_dom_sf"/>
</dbReference>
<dbReference type="InterPro" id="IPR050216">
    <property type="entry name" value="LRR_domain-containing"/>
</dbReference>
<dbReference type="InterPro" id="IPR027417">
    <property type="entry name" value="P-loop_NTPase"/>
</dbReference>
<dbReference type="InterPro" id="IPR020859">
    <property type="entry name" value="ROC"/>
</dbReference>
<dbReference type="PANTHER" id="PTHR48051">
    <property type="match status" value="1"/>
</dbReference>
<dbReference type="PANTHER" id="PTHR48051:SF54">
    <property type="entry name" value="LEUCINE-RICH REPEAT-CONTAINING PROTEIN"/>
    <property type="match status" value="1"/>
</dbReference>
<dbReference type="Pfam" id="PF00560">
    <property type="entry name" value="LRR_1"/>
    <property type="match status" value="1"/>
</dbReference>
<dbReference type="Pfam" id="PF13855">
    <property type="entry name" value="LRR_8"/>
    <property type="match status" value="3"/>
</dbReference>
<dbReference type="Pfam" id="PF08477">
    <property type="entry name" value="Roc"/>
    <property type="match status" value="1"/>
</dbReference>
<dbReference type="PRINTS" id="PR00019">
    <property type="entry name" value="LEURICHRPT"/>
</dbReference>
<dbReference type="SMART" id="SM00364">
    <property type="entry name" value="LRR_BAC"/>
    <property type="match status" value="10"/>
</dbReference>
<dbReference type="SMART" id="SM00365">
    <property type="entry name" value="LRR_SD22"/>
    <property type="match status" value="5"/>
</dbReference>
<dbReference type="SMART" id="SM00369">
    <property type="entry name" value="LRR_TYP"/>
    <property type="match status" value="13"/>
</dbReference>
<dbReference type="SUPFAM" id="SSF52058">
    <property type="entry name" value="L domain-like"/>
    <property type="match status" value="1"/>
</dbReference>
<dbReference type="SUPFAM" id="SSF52540">
    <property type="entry name" value="P-loop containing nucleoside triphosphate hydrolases"/>
    <property type="match status" value="1"/>
</dbReference>
<dbReference type="SUPFAM" id="SSF82615">
    <property type="entry name" value="Polo-box domain"/>
    <property type="match status" value="1"/>
</dbReference>
<dbReference type="PROSITE" id="PS51450">
    <property type="entry name" value="LRR"/>
    <property type="match status" value="12"/>
</dbReference>
<dbReference type="PROSITE" id="PS51424">
    <property type="entry name" value="ROC"/>
    <property type="match status" value="1"/>
</dbReference>